<gene>
    <name evidence="9" type="primary">NUFIP2</name>
    <name type="synonym">KIAA1321</name>
    <name type="ORF">PIG1</name>
</gene>
<sequence length="695" mass="76121">MEEKPGQPQPQHHHSHHHPHHHPQQQQQQPHHHHHYYFYNHSHNHHHHHHHQQPHQYLQHGAEGSPKAQPKPLKHEQKHTLQQHQETPKKKTGYGELNGNAGEREISLKNLSSDEATNPISRVLNGNQQVVDTSLKQTVKANTFGKAGIKTKNFIQKNSMDKKNGKSYENKSGENQSVDKSDTIPIPNGVVTNNSGYITNGYMGKGADNDGSGSESGYTTPKKRKARRNSAKGCENLNIVQDKIMQQETSVPTLKQGLETFKPDYSEQKGNRVDGSKPIWKYETGPGGTSRGKPAVGDMLRKSSDSKPGVSSKKFDDRPKGKHASAVASKEDSWTLFKPPPVFPVDNSSAKIVPKISYASKVKENLNKTIQNSSVSPTSSSSSSSSTGETQTQSSSRLSQVPMSALKSVTSANFSNGPVLAGTDGNVYPPGGQPLLTTAANTLTPISSGTDSVLQDMSLTSAAVEQIKTSLFIYPSNMQTMLLSTAQVDLPSQTDQQNLGDIFQNQWGLSFINEPSAGPETVTGKSSEHKVMEVTFQGEYPATLVSQGAEIIPSGTEHPVFPKAYELEKRTSPQVLGSILKSGTTSESGALSLEPSHIGDLQKADTSSQGALVFLSKDYEIESQNPLASPTNTLLGSAKEQRYQRGLERNDSWGSFDLRAAIVYHTKEMESIWNLQKQDPKRIITYNEAMDSPDQ</sequence>
<comment type="function">
    <text evidence="2">Binds RNA.</text>
</comment>
<comment type="subunit">
    <text evidence="2 3">Interacts with FMR1 (via N-terminus). Interacts with DDX6 (PubMed:26184334).</text>
</comment>
<comment type="interaction">
    <interactant intactId="EBI-1210753">
        <id>Q7Z417</id>
    </interactant>
    <interactant intactId="EBI-10173507">
        <id>Q6UY14-3</id>
        <label>ADAMTSL4</label>
    </interactant>
    <organismsDiffer>false</organismsDiffer>
    <experiments>3</experiments>
</comment>
<comment type="interaction">
    <interactant intactId="EBI-1210753">
        <id>Q7Z417</id>
    </interactant>
    <interactant intactId="EBI-17286414">
        <id>A2BDD9</id>
        <label>AMOT</label>
    </interactant>
    <organismsDiffer>false</organismsDiffer>
    <experiments>3</experiments>
</comment>
<comment type="interaction">
    <interactant intactId="EBI-1210753">
        <id>Q7Z417</id>
    </interactant>
    <interactant intactId="EBI-1046993">
        <id>Q66GS9</id>
        <label>CEP135</label>
    </interactant>
    <organismsDiffer>false</organismsDiffer>
    <experiments>3</experiments>
</comment>
<comment type="interaction">
    <interactant intactId="EBI-1210753">
        <id>Q7Z417</id>
    </interactant>
    <interactant intactId="EBI-741977">
        <id>Q96MT8</id>
        <label>CEP63</label>
    </interactant>
    <organismsDiffer>false</organismsDiffer>
    <experiments>3</experiments>
</comment>
<comment type="interaction">
    <interactant intactId="EBI-1210753">
        <id>Q7Z417</id>
    </interactant>
    <interactant intactId="EBI-2531022">
        <id>P49747</id>
        <label>COMP</label>
    </interactant>
    <organismsDiffer>false</organismsDiffer>
    <experiments>3</experiments>
</comment>
<comment type="interaction">
    <interactant intactId="EBI-1210753">
        <id>Q7Z417</id>
    </interactant>
    <interactant intactId="EBI-3867333">
        <id>A8MQ03</id>
        <label>CYSRT1</label>
    </interactant>
    <organismsDiffer>false</organismsDiffer>
    <experiments>3</experiments>
</comment>
<comment type="interaction">
    <interactant intactId="EBI-1210753">
        <id>Q7Z417</id>
    </interactant>
    <interactant intactId="EBI-10976677">
        <id>G5E9A7</id>
        <label>DMWD</label>
    </interactant>
    <organismsDiffer>false</organismsDiffer>
    <experiments>3</experiments>
</comment>
<comment type="interaction">
    <interactant intactId="EBI-1210753">
        <id>Q7Z417</id>
    </interactant>
    <interactant intactId="EBI-743414">
        <id>O95967</id>
        <label>EFEMP2</label>
    </interactant>
    <organismsDiffer>false</organismsDiffer>
    <experiments>6</experiments>
</comment>
<comment type="interaction">
    <interactant intactId="EBI-1210753">
        <id>Q7Z417</id>
    </interactant>
    <interactant intactId="EBI-12260294">
        <id>Q9NQ30</id>
        <label>ESM1</label>
    </interactant>
    <organismsDiffer>false</organismsDiffer>
    <experiments>3</experiments>
</comment>
<comment type="interaction">
    <interactant intactId="EBI-1210753">
        <id>Q7Z417</id>
    </interactant>
    <interactant intactId="EBI-947897">
        <id>Q9UBX5</id>
        <label>FBLN5</label>
    </interactant>
    <organismsDiffer>false</organismsDiffer>
    <experiments>5</experiments>
</comment>
<comment type="interaction">
    <interactant intactId="EBI-1210753">
        <id>Q7Z417</id>
    </interactant>
    <interactant intactId="EBI-750641">
        <id>Q5TD97</id>
        <label>FHL5</label>
    </interactant>
    <organismsDiffer>false</organismsDiffer>
    <experiments>3</experiments>
</comment>
<comment type="interaction">
    <interactant intactId="EBI-1210753">
        <id>Q7Z417</id>
    </interactant>
    <interactant intactId="EBI-366305">
        <id>Q06787</id>
        <label>FMR1</label>
    </interactant>
    <organismsDiffer>false</organismsDiffer>
    <experiments>3</experiments>
</comment>
<comment type="interaction">
    <interactant intactId="EBI-1210753">
        <id>Q7Z417</id>
    </interactant>
    <interactant intactId="EBI-9050116">
        <id>Q9BTY2</id>
        <label>FUCA2</label>
    </interactant>
    <organismsDiffer>false</organismsDiffer>
    <experiments>3</experiments>
</comment>
<comment type="interaction">
    <interactant intactId="EBI-1210753">
        <id>Q7Z417</id>
    </interactant>
    <interactant intactId="EBI-11035716">
        <id>Q9UN86-2</id>
        <label>G3BP2</label>
    </interactant>
    <organismsDiffer>false</organismsDiffer>
    <experiments>4</experiments>
</comment>
<comment type="interaction">
    <interactant intactId="EBI-1210753">
        <id>Q7Z417</id>
    </interactant>
    <interactant intactId="EBI-747754">
        <id>P28799</id>
        <label>GRN</label>
    </interactant>
    <organismsDiffer>false</organismsDiffer>
    <experiments>10</experiments>
</comment>
<comment type="interaction">
    <interactant intactId="EBI-1210753">
        <id>Q7Z417</id>
    </interactant>
    <interactant intactId="EBI-466029">
        <id>P42858</id>
        <label>HTT</label>
    </interactant>
    <organismsDiffer>false</organismsDiffer>
    <experiments>6</experiments>
</comment>
<comment type="interaction">
    <interactant intactId="EBI-1210753">
        <id>Q7Z417</id>
    </interactant>
    <interactant intactId="EBI-10975473">
        <id>O60333-2</id>
        <label>KIF1B</label>
    </interactant>
    <organismsDiffer>false</organismsDiffer>
    <experiments>3</experiments>
</comment>
<comment type="interaction">
    <interactant intactId="EBI-1210753">
        <id>Q7Z417</id>
    </interactant>
    <interactant intactId="EBI-10981970">
        <id>Q5T749</id>
        <label>KPRP</label>
    </interactant>
    <organismsDiffer>false</organismsDiffer>
    <experiments>5</experiments>
</comment>
<comment type="interaction">
    <interactant intactId="EBI-1210753">
        <id>Q7Z417</id>
    </interactant>
    <interactant intactId="EBI-948001">
        <id>Q15323</id>
        <label>KRT31</label>
    </interactant>
    <organismsDiffer>false</organismsDiffer>
    <experiments>3</experiments>
</comment>
<comment type="interaction">
    <interactant intactId="EBI-1210753">
        <id>Q7Z417</id>
    </interactant>
    <interactant intactId="EBI-1045716">
        <id>O76014</id>
        <label>KRT37</label>
    </interactant>
    <organismsDiffer>false</organismsDiffer>
    <experiments>3</experiments>
</comment>
<comment type="interaction">
    <interactant intactId="EBI-1210753">
        <id>Q7Z417</id>
    </interactant>
    <interactant intactId="EBI-11749135">
        <id>Q8IUG1</id>
        <label>KRTAP1-3</label>
    </interactant>
    <organismsDiffer>false</organismsDiffer>
    <experiments>3</experiments>
</comment>
<comment type="interaction">
    <interactant intactId="EBI-1210753">
        <id>Q7Z417</id>
    </interactant>
    <interactant intactId="EBI-11741292">
        <id>Q9BYS1</id>
        <label>KRTAP1-5</label>
    </interactant>
    <organismsDiffer>false</organismsDiffer>
    <experiments>5</experiments>
</comment>
<comment type="interaction">
    <interactant intactId="EBI-1210753">
        <id>Q7Z417</id>
    </interactant>
    <interactant intactId="EBI-10172150">
        <id>P60370</id>
        <label>KRTAP10-5</label>
    </interactant>
    <organismsDiffer>false</organismsDiffer>
    <experiments>6</experiments>
</comment>
<comment type="interaction">
    <interactant intactId="EBI-1210753">
        <id>Q7Z417</id>
    </interactant>
    <interactant intactId="EBI-10172290">
        <id>P60409</id>
        <label>KRTAP10-7</label>
    </interactant>
    <organismsDiffer>false</organismsDiffer>
    <experiments>6</experiments>
</comment>
<comment type="interaction">
    <interactant intactId="EBI-1210753">
        <id>Q7Z417</id>
    </interactant>
    <interactant intactId="EBI-10171774">
        <id>P60410</id>
        <label>KRTAP10-8</label>
    </interactant>
    <organismsDiffer>false</organismsDiffer>
    <experiments>6</experiments>
</comment>
<comment type="interaction">
    <interactant intactId="EBI-1210753">
        <id>Q7Z417</id>
    </interactant>
    <interactant intactId="EBI-10172052">
        <id>P60411</id>
        <label>KRTAP10-9</label>
    </interactant>
    <organismsDiffer>false</organismsDiffer>
    <experiments>8</experiments>
</comment>
<comment type="interaction">
    <interactant intactId="EBI-1210753">
        <id>Q7Z417</id>
    </interactant>
    <interactant intactId="EBI-1052037">
        <id>Q8IUC1</id>
        <label>KRTAP11-1</label>
    </interactant>
    <organismsDiffer>false</organismsDiffer>
    <experiments>3</experiments>
</comment>
<comment type="interaction">
    <interactant intactId="EBI-1210753">
        <id>Q7Z417</id>
    </interactant>
    <interactant intactId="EBI-11953334">
        <id>P60328</id>
        <label>KRTAP12-3</label>
    </interactant>
    <organismsDiffer>false</organismsDiffer>
    <experiments>3</experiments>
</comment>
<comment type="interaction">
    <interactant intactId="EBI-1210753">
        <id>Q7Z417</id>
    </interactant>
    <interactant intactId="EBI-14065470">
        <id>Q9BYR9</id>
        <label>KRTAP2-4</label>
    </interactant>
    <organismsDiffer>false</organismsDiffer>
    <experiments>3</experiments>
</comment>
<comment type="interaction">
    <interactant intactId="EBI-1210753">
        <id>Q7Z417</id>
    </interactant>
    <interactant intactId="EBI-751260">
        <id>Q9BYR7</id>
        <label>KRTAP3-2</label>
    </interactant>
    <organismsDiffer>false</organismsDiffer>
    <experiments>6</experiments>
</comment>
<comment type="interaction">
    <interactant intactId="EBI-1210753">
        <id>Q7Z417</id>
    </interactant>
    <interactant intactId="EBI-3957694">
        <id>Q9BYR6</id>
        <label>KRTAP3-3</label>
    </interactant>
    <organismsDiffer>false</organismsDiffer>
    <experiments>3</experiments>
</comment>
<comment type="interaction">
    <interactant intactId="EBI-1210753">
        <id>Q7Z417</id>
    </interactant>
    <interactant intactId="EBI-34579671">
        <id>Q9BYQ7</id>
        <label>KRTAP4-1</label>
    </interactant>
    <organismsDiffer>false</organismsDiffer>
    <experiments>3</experiments>
</comment>
<comment type="interaction">
    <interactant intactId="EBI-1210753">
        <id>Q7Z417</id>
    </interactant>
    <interactant intactId="EBI-10302392">
        <id>Q9BYQ6</id>
        <label>KRTAP4-11</label>
    </interactant>
    <organismsDiffer>false</organismsDiffer>
    <experiments>6</experiments>
</comment>
<comment type="interaction">
    <interactant intactId="EBI-1210753">
        <id>Q7Z417</id>
    </interactant>
    <interactant intactId="EBI-739863">
        <id>Q9BQ66</id>
        <label>KRTAP4-12</label>
    </interactant>
    <organismsDiffer>false</organismsDiffer>
    <experiments>8</experiments>
</comment>
<comment type="interaction">
    <interactant intactId="EBI-1210753">
        <id>Q7Z417</id>
    </interactant>
    <interactant intactId="EBI-10172511">
        <id>Q9BYR5</id>
        <label>KRTAP4-2</label>
    </interactant>
    <organismsDiffer>false</organismsDiffer>
    <experiments>6</experiments>
</comment>
<comment type="interaction">
    <interactant intactId="EBI-1210753">
        <id>Q7Z417</id>
    </interactant>
    <interactant intactId="EBI-11958132">
        <id>Q9BYR3</id>
        <label>KRTAP4-4</label>
    </interactant>
    <organismsDiffer>false</organismsDiffer>
    <experiments>3</experiments>
</comment>
<comment type="interaction">
    <interactant intactId="EBI-1210753">
        <id>Q7Z417</id>
    </interactant>
    <interactant intactId="EBI-11993254">
        <id>Q9BYR2</id>
        <label>KRTAP4-5</label>
    </interactant>
    <organismsDiffer>false</organismsDiffer>
    <experiments>3</experiments>
</comment>
<comment type="interaction">
    <interactant intactId="EBI-1210753">
        <id>Q7Z417</id>
    </interactant>
    <interactant intactId="EBI-11993296">
        <id>Q6L8G4</id>
        <label>KRTAP5-11</label>
    </interactant>
    <organismsDiffer>false</organismsDiffer>
    <experiments>3</experiments>
</comment>
<comment type="interaction">
    <interactant intactId="EBI-1210753">
        <id>Q7Z417</id>
    </interactant>
    <interactant intactId="EBI-11958178">
        <id>Q701N4</id>
        <label>KRTAP5-2</label>
    </interactant>
    <organismsDiffer>false</organismsDiffer>
    <experiments>3</experiments>
</comment>
<comment type="interaction">
    <interactant intactId="EBI-1210753">
        <id>Q7Z417</id>
    </interactant>
    <interactant intactId="EBI-11974251">
        <id>Q6L8H2</id>
        <label>KRTAP5-3</label>
    </interactant>
    <organismsDiffer>false</organismsDiffer>
    <experiments>3</experiments>
</comment>
<comment type="interaction">
    <interactant intactId="EBI-1210753">
        <id>Q7Z417</id>
    </interactant>
    <interactant intactId="EBI-11963072">
        <id>Q6L8H1</id>
        <label>KRTAP5-4</label>
    </interactant>
    <organismsDiffer>false</organismsDiffer>
    <experiments>3</experiments>
</comment>
<comment type="interaction">
    <interactant intactId="EBI-1210753">
        <id>Q7Z417</id>
    </interactant>
    <interactant intactId="EBI-10250562">
        <id>Q6L8G9</id>
        <label>KRTAP5-6</label>
    </interactant>
    <organismsDiffer>false</organismsDiffer>
    <experiments>6</experiments>
</comment>
<comment type="interaction">
    <interactant intactId="EBI-1210753">
        <id>Q7Z417</id>
    </interactant>
    <interactant intactId="EBI-3958099">
        <id>P26371</id>
        <label>KRTAP5-9</label>
    </interactant>
    <organismsDiffer>false</organismsDiffer>
    <experiments>5</experiments>
</comment>
<comment type="interaction">
    <interactant intactId="EBI-1210753">
        <id>Q7Z417</id>
    </interactant>
    <interactant intactId="EBI-1044640">
        <id>Q9BYQ4</id>
        <label>KRTAP9-2</label>
    </interactant>
    <organismsDiffer>false</organismsDiffer>
    <experiments>6</experiments>
</comment>
<comment type="interaction">
    <interactant intactId="EBI-1210753">
        <id>Q7Z417</id>
    </interactant>
    <interactant intactId="EBI-1043191">
        <id>Q9BYQ3</id>
        <label>KRTAP9-3</label>
    </interactant>
    <organismsDiffer>false</organismsDiffer>
    <experiments>3</experiments>
</comment>
<comment type="interaction">
    <interactant intactId="EBI-1210753">
        <id>Q7Z417</id>
    </interactant>
    <interactant intactId="EBI-10185730">
        <id>Q9BYQ2</id>
        <label>KRTAP9-4</label>
    </interactant>
    <organismsDiffer>false</organismsDiffer>
    <experiments>3</experiments>
</comment>
<comment type="interaction">
    <interactant intactId="EBI-1210753">
        <id>Q7Z417</id>
    </interactant>
    <interactant intactId="EBI-11958364">
        <id>Q9BYQ0</id>
        <label>KRTAP9-8</label>
    </interactant>
    <organismsDiffer>false</organismsDiffer>
    <experiments>3</experiments>
</comment>
<comment type="interaction">
    <interactant intactId="EBI-1210753">
        <id>Q7Z417</id>
    </interactant>
    <interactant intactId="EBI-10245913">
        <id>Q5T7P3</id>
        <label>LCE1B</label>
    </interactant>
    <organismsDiffer>false</organismsDiffer>
    <experiments>3</experiments>
</comment>
<comment type="interaction">
    <interactant intactId="EBI-1210753">
        <id>Q7Z417</id>
    </interactant>
    <interactant intactId="EBI-11973993">
        <id>Q5TA81</id>
        <label>LCE2C</label>
    </interactant>
    <organismsDiffer>false</organismsDiffer>
    <experiments>3</experiments>
</comment>
<comment type="interaction">
    <interactant intactId="EBI-1210753">
        <id>Q7Z417</id>
    </interactant>
    <interactant intactId="EBI-10246750">
        <id>Q5TA82</id>
        <label>LCE2D</label>
    </interactant>
    <organismsDiffer>false</organismsDiffer>
    <experiments>3</experiments>
</comment>
<comment type="interaction">
    <interactant intactId="EBI-1210753">
        <id>Q7Z417</id>
    </interactant>
    <interactant intactId="EBI-3957707">
        <id>Q9UHV8</id>
        <label>LGALS13</label>
    </interactant>
    <organismsDiffer>false</organismsDiffer>
    <experiments>3</experiments>
</comment>
<comment type="interaction">
    <interactant intactId="EBI-1210753">
        <id>Q7Z417</id>
    </interactant>
    <interactant intactId="EBI-724076">
        <id>Q99750</id>
        <label>MDFI</label>
    </interactant>
    <organismsDiffer>false</organismsDiffer>
    <experiments>4</experiments>
</comment>
<comment type="interaction">
    <interactant intactId="EBI-1210753">
        <id>Q7Z417</id>
    </interactant>
    <interactant intactId="EBI-947743">
        <id>A6BM72</id>
        <label>MEGF11</label>
    </interactant>
    <organismsDiffer>false</organismsDiffer>
    <experiments>3</experiments>
</comment>
<comment type="interaction">
    <interactant intactId="EBI-1210753">
        <id>Q7Z417</id>
    </interactant>
    <interactant intactId="EBI-475646">
        <id>P07196</id>
        <label>NEFL</label>
    </interactant>
    <organismsDiffer>false</organismsDiffer>
    <experiments>3</experiments>
</comment>
<comment type="interaction">
    <interactant intactId="EBI-1210753">
        <id>Q7Z417</id>
    </interactant>
    <interactant intactId="EBI-946274">
        <id>Q99435</id>
        <label>NELL2</label>
    </interactant>
    <organismsDiffer>false</organismsDiffer>
    <experiments>2</experiments>
</comment>
<comment type="interaction">
    <interactant intactId="EBI-1210753">
        <id>Q7Z417</id>
    </interactant>
    <interactant intactId="EBI-8744243">
        <id>Q5BJF6</id>
        <label>ODF2</label>
    </interactant>
    <organismsDiffer>false</organismsDiffer>
    <experiments>3</experiments>
</comment>
<comment type="interaction">
    <interactant intactId="EBI-1210753">
        <id>Q7Z417</id>
    </interactant>
    <interactant intactId="EBI-751290">
        <id>Q92824</id>
        <label>PCSK5</label>
    </interactant>
    <organismsDiffer>false</organismsDiffer>
    <experiments>3</experiments>
</comment>
<comment type="interaction">
    <interactant intactId="EBI-1210753">
        <id>Q7Z417</id>
    </interactant>
    <interactant intactId="EBI-11956269">
        <id>Q92824-2</id>
        <label>PCSK5</label>
    </interactant>
    <organismsDiffer>false</organismsDiffer>
    <experiments>3</experiments>
</comment>
<comment type="interaction">
    <interactant intactId="EBI-1210753">
        <id>Q7Z417</id>
    </interactant>
    <interactant intactId="EBI-1249608">
        <id>Q5VY43</id>
        <label>PEAR1</label>
    </interactant>
    <organismsDiffer>false</organismsDiffer>
    <experiments>3</experiments>
</comment>
<comment type="interaction">
    <interactant intactId="EBI-1210753">
        <id>Q7Z417</id>
    </interactant>
    <interactant intactId="EBI-740019">
        <id>O15162</id>
        <label>PLSCR1</label>
    </interactant>
    <organismsDiffer>false</organismsDiffer>
    <experiments>2</experiments>
</comment>
<comment type="interaction">
    <interactant intactId="EBI-1210753">
        <id>Q7Z417</id>
    </interactant>
    <interactant intactId="EBI-722161">
        <id>P30044</id>
        <label>PRDX5</label>
    </interactant>
    <organismsDiffer>false</organismsDiffer>
    <experiments>3</experiments>
</comment>
<comment type="interaction">
    <interactant intactId="EBI-1210753">
        <id>Q7Z417</id>
    </interactant>
    <interactant intactId="EBI-3918154">
        <id>Q9UGC6</id>
        <label>RGS17</label>
    </interactant>
    <organismsDiffer>false</organismsDiffer>
    <experiments>3</experiments>
</comment>
<comment type="interaction">
    <interactant intactId="EBI-1210753">
        <id>Q7Z417</id>
    </interactant>
    <interactant intactId="EBI-874907">
        <id>P49795</id>
        <label>RGS19</label>
    </interactant>
    <organismsDiffer>false</organismsDiffer>
    <experiments>3</experiments>
</comment>
<comment type="interaction">
    <interactant intactId="EBI-1210753">
        <id>Q7Z417</id>
    </interactant>
    <interactant intactId="EBI-10178530">
        <id>O76081-6</id>
        <label>RGS20</label>
    </interactant>
    <organismsDiffer>false</organismsDiffer>
    <experiments>3</experiments>
</comment>
<comment type="interaction">
    <interactant intactId="EBI-1210753">
        <id>Q7Z417</id>
    </interactant>
    <interactant intactId="EBI-5235340">
        <id>Q7Z699</id>
        <label>SPRED1</label>
    </interactant>
    <organismsDiffer>false</organismsDiffer>
    <experiments>3</experiments>
</comment>
<comment type="interaction">
    <interactant intactId="EBI-1210753">
        <id>Q7Z417</id>
    </interactant>
    <interactant intactId="EBI-359224">
        <id>Q13077</id>
        <label>TRAF1</label>
    </interactant>
    <organismsDiffer>false</organismsDiffer>
    <experiments>3</experiments>
</comment>
<comment type="interaction">
    <interactant intactId="EBI-1210753">
        <id>Q7Z417</id>
    </interactant>
    <interactant intactId="EBI-2850497">
        <id>Q96DN2</id>
        <label>VWCE</label>
    </interactant>
    <organismsDiffer>false</organismsDiffer>
    <experiments>3</experiments>
</comment>
<comment type="interaction">
    <interactant intactId="EBI-1210753">
        <id>Q7Z417</id>
    </interactant>
    <interactant intactId="EBI-720609">
        <id>O76024</id>
        <label>WFS1</label>
    </interactant>
    <organismsDiffer>false</organismsDiffer>
    <experiments>3</experiments>
</comment>
<comment type="subcellular location">
    <subcellularLocation>
        <location evidence="2 3">Nucleus</location>
    </subcellularLocation>
    <subcellularLocation>
        <location evidence="2 3">Cytoplasm</location>
    </subcellularLocation>
    <subcellularLocation>
        <location evidence="3">Cytoplasm</location>
        <location evidence="3">Stress granule</location>
    </subcellularLocation>
    <text evidence="2 3">Distribution is cell cycle-modulated, being cytoplasmic in the G2/M phase and accumulating in nucleus during the G1 phase (PubMed:12837692).</text>
</comment>
<comment type="alternative products">
    <event type="alternative splicing"/>
    <isoform>
        <id>Q7Z417-1</id>
        <name>1</name>
        <sequence type="displayed"/>
    </isoform>
    <isoform>
        <id>Q7Z417-2</id>
        <name>2</name>
        <sequence type="described" ref="VSP_056177"/>
    </isoform>
</comment>
<comment type="sequence caution" evidence="7">
    <conflict type="erroneous initiation">
        <sequence resource="EMBL-CDS" id="BAA92559"/>
    </conflict>
</comment>
<accession>Q7Z417</accession>
<accession>A1L3A6</accession>
<accession>A1L3A7</accession>
<accession>Q9P2M5</accession>
<protein>
    <recommendedName>
        <fullName evidence="8">FMR1-interacting protein NUFIP2</fullName>
    </recommendedName>
    <alternativeName>
        <fullName>82 kDa FMRP-interacting protein</fullName>
        <shortName>82-FIP</shortName>
    </alternativeName>
    <alternativeName>
        <fullName>Cell proliferation-inducing gene 1 protein</fullName>
    </alternativeName>
    <alternativeName>
        <fullName>FMRP-interacting protein 2</fullName>
    </alternativeName>
    <alternativeName>
        <fullName evidence="9">Nuclear FMR1-interacting protein 2</fullName>
    </alternativeName>
</protein>
<keyword id="KW-0025">Alternative splicing</keyword>
<keyword id="KW-0963">Cytoplasm</keyword>
<keyword id="KW-0903">Direct protein sequencing</keyword>
<keyword id="KW-1017">Isopeptide bond</keyword>
<keyword id="KW-0488">Methylation</keyword>
<keyword id="KW-0539">Nucleus</keyword>
<keyword id="KW-0597">Phosphoprotein</keyword>
<keyword id="KW-1267">Proteomics identification</keyword>
<keyword id="KW-1185">Reference proteome</keyword>
<keyword id="KW-0694">RNA-binding</keyword>
<keyword id="KW-0832">Ubl conjugation</keyword>
<proteinExistence type="evidence at protein level"/>
<dbReference type="EMBL" id="AJ493465">
    <property type="protein sequence ID" value="CAD38278.1"/>
    <property type="molecule type" value="mRNA"/>
</dbReference>
<dbReference type="EMBL" id="AY232289">
    <property type="protein sequence ID" value="AAP69984.1"/>
    <property type="molecule type" value="mRNA"/>
</dbReference>
<dbReference type="EMBL" id="AB037742">
    <property type="protein sequence ID" value="BAA92559.1"/>
    <property type="status" value="ALT_INIT"/>
    <property type="molecule type" value="mRNA"/>
</dbReference>
<dbReference type="EMBL" id="AK297732">
    <property type="protein sequence ID" value="BAG60082.1"/>
    <property type="molecule type" value="mRNA"/>
</dbReference>
<dbReference type="EMBL" id="AK293075">
    <property type="protein sequence ID" value="BAF85764.1"/>
    <property type="molecule type" value="mRNA"/>
</dbReference>
<dbReference type="EMBL" id="AC005412">
    <property type="status" value="NOT_ANNOTATED_CDS"/>
    <property type="molecule type" value="Genomic_DNA"/>
</dbReference>
<dbReference type="EMBL" id="CH471159">
    <property type="protein sequence ID" value="EAW51186.1"/>
    <property type="molecule type" value="Genomic_DNA"/>
</dbReference>
<dbReference type="EMBL" id="CH471159">
    <property type="protein sequence ID" value="EAW51187.1"/>
    <property type="molecule type" value="Genomic_DNA"/>
</dbReference>
<dbReference type="EMBL" id="BC129989">
    <property type="protein sequence ID" value="AAI29990.1"/>
    <property type="molecule type" value="mRNA"/>
</dbReference>
<dbReference type="EMBL" id="BC129990">
    <property type="protein sequence ID" value="AAI29991.1"/>
    <property type="molecule type" value="mRNA"/>
</dbReference>
<dbReference type="EMBL" id="BC108307">
    <property type="protein sequence ID" value="AAI08308.1"/>
    <property type="molecule type" value="mRNA"/>
</dbReference>
<dbReference type="CCDS" id="CCDS32600.1">
    <molecule id="Q7Z417-1"/>
</dbReference>
<dbReference type="RefSeq" id="NP_065823.1">
    <molecule id="Q7Z417-1"/>
    <property type="nucleotide sequence ID" value="NM_020772.3"/>
</dbReference>
<dbReference type="SASBDB" id="Q7Z417"/>
<dbReference type="BioGRID" id="121591">
    <property type="interactions" value="423"/>
</dbReference>
<dbReference type="CORUM" id="Q7Z417"/>
<dbReference type="DIP" id="DIP-29023N"/>
<dbReference type="FunCoup" id="Q7Z417">
    <property type="interactions" value="3736"/>
</dbReference>
<dbReference type="IntAct" id="Q7Z417">
    <property type="interactions" value="200"/>
</dbReference>
<dbReference type="MINT" id="Q7Z417"/>
<dbReference type="STRING" id="9606.ENSP00000225388"/>
<dbReference type="GlyCosmos" id="Q7Z417">
    <property type="glycosylation" value="1 site, 1 glycan"/>
</dbReference>
<dbReference type="GlyGen" id="Q7Z417">
    <property type="glycosylation" value="20 sites, 4 N-linked glycans (4 sites), 1 O-linked glycan (16 sites)"/>
</dbReference>
<dbReference type="iPTMnet" id="Q7Z417"/>
<dbReference type="MetOSite" id="Q7Z417"/>
<dbReference type="PhosphoSitePlus" id="Q7Z417"/>
<dbReference type="SwissPalm" id="Q7Z417"/>
<dbReference type="BioMuta" id="NUFIP2"/>
<dbReference type="DMDM" id="74713454"/>
<dbReference type="CPTAC" id="CPTAC-985"/>
<dbReference type="jPOST" id="Q7Z417"/>
<dbReference type="MassIVE" id="Q7Z417"/>
<dbReference type="PaxDb" id="9606-ENSP00000225388"/>
<dbReference type="PeptideAtlas" id="Q7Z417"/>
<dbReference type="ProteomicsDB" id="69128">
    <molecule id="Q7Z417-1"/>
</dbReference>
<dbReference type="Pumba" id="Q7Z417"/>
<dbReference type="Antibodypedia" id="2837">
    <property type="antibodies" value="92 antibodies from 23 providers"/>
</dbReference>
<dbReference type="DNASU" id="57532"/>
<dbReference type="Ensembl" id="ENST00000225388.9">
    <molecule id="Q7Z417-1"/>
    <property type="protein sequence ID" value="ENSP00000225388.3"/>
    <property type="gene ID" value="ENSG00000108256.9"/>
</dbReference>
<dbReference type="Ensembl" id="ENST00000579665.1">
    <molecule id="Q7Z417-2"/>
    <property type="protein sequence ID" value="ENSP00000463450.1"/>
    <property type="gene ID" value="ENSG00000108256.9"/>
</dbReference>
<dbReference type="GeneID" id="57532"/>
<dbReference type="KEGG" id="hsa:57532"/>
<dbReference type="MANE-Select" id="ENST00000225388.9">
    <property type="protein sequence ID" value="ENSP00000225388.3"/>
    <property type="RefSeq nucleotide sequence ID" value="NM_020772.3"/>
    <property type="RefSeq protein sequence ID" value="NP_065823.1"/>
</dbReference>
<dbReference type="UCSC" id="uc002hdx.5">
    <molecule id="Q7Z417-1"/>
    <property type="organism name" value="human"/>
</dbReference>
<dbReference type="AGR" id="HGNC:17634"/>
<dbReference type="CTD" id="57532"/>
<dbReference type="DisGeNET" id="57532"/>
<dbReference type="GeneCards" id="NUFIP2"/>
<dbReference type="HGNC" id="HGNC:17634">
    <property type="gene designation" value="NUFIP2"/>
</dbReference>
<dbReference type="HPA" id="ENSG00000108256">
    <property type="expression patterns" value="Tissue enhanced (bone)"/>
</dbReference>
<dbReference type="MIM" id="609356">
    <property type="type" value="gene"/>
</dbReference>
<dbReference type="neXtProt" id="NX_Q7Z417"/>
<dbReference type="OpenTargets" id="ENSG00000108256"/>
<dbReference type="PharmGKB" id="PA143485564"/>
<dbReference type="VEuPathDB" id="HostDB:ENSG00000108256"/>
<dbReference type="eggNOG" id="ENOG502QPMD">
    <property type="taxonomic scope" value="Eukaryota"/>
</dbReference>
<dbReference type="GeneTree" id="ENSGT00440000038328"/>
<dbReference type="HOGENOM" id="CLU_020745_0_0_1"/>
<dbReference type="InParanoid" id="Q7Z417"/>
<dbReference type="OMA" id="NEQKGNR"/>
<dbReference type="OrthoDB" id="8849279at2759"/>
<dbReference type="PAN-GO" id="Q7Z417">
    <property type="GO annotations" value="4 GO annotations based on evolutionary models"/>
</dbReference>
<dbReference type="PhylomeDB" id="Q7Z417"/>
<dbReference type="TreeFam" id="TF332832"/>
<dbReference type="PathwayCommons" id="Q7Z417"/>
<dbReference type="SignaLink" id="Q7Z417"/>
<dbReference type="BioGRID-ORCS" id="57532">
    <property type="hits" value="42 hits in 1162 CRISPR screens"/>
</dbReference>
<dbReference type="CD-CODE" id="232F8A39">
    <property type="entry name" value="P-body"/>
</dbReference>
<dbReference type="CD-CODE" id="DEE660B4">
    <property type="entry name" value="Stress granule"/>
</dbReference>
<dbReference type="ChiTaRS" id="NUFIP2">
    <property type="organism name" value="human"/>
</dbReference>
<dbReference type="GeneWiki" id="NUFIP2"/>
<dbReference type="GenomeRNAi" id="57532"/>
<dbReference type="Pharos" id="Q7Z417">
    <property type="development level" value="Tbio"/>
</dbReference>
<dbReference type="PRO" id="PR:Q7Z417"/>
<dbReference type="Proteomes" id="UP000005640">
    <property type="component" value="Chromosome 17"/>
</dbReference>
<dbReference type="RNAct" id="Q7Z417">
    <property type="molecule type" value="protein"/>
</dbReference>
<dbReference type="Bgee" id="ENSG00000108256">
    <property type="expression patterns" value="Expressed in kidney epithelium and 196 other cell types or tissues"/>
</dbReference>
<dbReference type="GO" id="GO:0005737">
    <property type="term" value="C:cytoplasm"/>
    <property type="evidence" value="ECO:0000314"/>
    <property type="project" value="UniProtKB"/>
</dbReference>
<dbReference type="GO" id="GO:0010494">
    <property type="term" value="C:cytoplasmic stress granule"/>
    <property type="evidence" value="ECO:0000314"/>
    <property type="project" value="UniProtKB"/>
</dbReference>
<dbReference type="GO" id="GO:0005829">
    <property type="term" value="C:cytosol"/>
    <property type="evidence" value="ECO:0000314"/>
    <property type="project" value="HPA"/>
</dbReference>
<dbReference type="GO" id="GO:0016020">
    <property type="term" value="C:membrane"/>
    <property type="evidence" value="ECO:0007005"/>
    <property type="project" value="UniProtKB"/>
</dbReference>
<dbReference type="GO" id="GO:0016604">
    <property type="term" value="C:nuclear body"/>
    <property type="evidence" value="ECO:0000314"/>
    <property type="project" value="HPA"/>
</dbReference>
<dbReference type="GO" id="GO:0005654">
    <property type="term" value="C:nucleoplasm"/>
    <property type="evidence" value="ECO:0000314"/>
    <property type="project" value="HPA"/>
</dbReference>
<dbReference type="GO" id="GO:0005634">
    <property type="term" value="C:nucleus"/>
    <property type="evidence" value="ECO:0000314"/>
    <property type="project" value="UniProtKB"/>
</dbReference>
<dbReference type="GO" id="GO:0005840">
    <property type="term" value="C:ribosome"/>
    <property type="evidence" value="ECO:0000314"/>
    <property type="project" value="HGNC-UCL"/>
</dbReference>
<dbReference type="GO" id="GO:0003723">
    <property type="term" value="F:RNA binding"/>
    <property type="evidence" value="ECO:0000314"/>
    <property type="project" value="HGNC-UCL"/>
</dbReference>
<dbReference type="InterPro" id="IPR032747">
    <property type="entry name" value="NUFIP2"/>
</dbReference>
<dbReference type="PANTHER" id="PTHR28333:SF2">
    <property type="entry name" value="FMR1-INTERACTING PROTEIN NUFIP2"/>
    <property type="match status" value="1"/>
</dbReference>
<dbReference type="PANTHER" id="PTHR28333">
    <property type="entry name" value="NUCLEAR FRAGILE X MENTAL RETARDATION-INTERACTING PROTEIN 2"/>
    <property type="match status" value="1"/>
</dbReference>
<dbReference type="Pfam" id="PF15293">
    <property type="entry name" value="NUFIP2"/>
    <property type="match status" value="1"/>
</dbReference>
<evidence type="ECO:0000256" key="1">
    <source>
        <dbReference type="SAM" id="MobiDB-lite"/>
    </source>
</evidence>
<evidence type="ECO:0000269" key="2">
    <source>
    </source>
</evidence>
<evidence type="ECO:0000269" key="3">
    <source>
    </source>
</evidence>
<evidence type="ECO:0000269" key="4">
    <source ref="8"/>
</evidence>
<evidence type="ECO:0000303" key="5">
    <source>
    </source>
</evidence>
<evidence type="ECO:0000303" key="6">
    <source>
    </source>
</evidence>
<evidence type="ECO:0000305" key="7"/>
<evidence type="ECO:0000305" key="8">
    <source>
    </source>
</evidence>
<evidence type="ECO:0000312" key="9">
    <source>
        <dbReference type="HGNC" id="HGNC:17634"/>
    </source>
</evidence>
<evidence type="ECO:0007744" key="10">
    <source>
    </source>
</evidence>
<evidence type="ECO:0007744" key="11">
    <source>
    </source>
</evidence>
<evidence type="ECO:0007744" key="12">
    <source>
    </source>
</evidence>
<evidence type="ECO:0007744" key="13">
    <source>
    </source>
</evidence>
<evidence type="ECO:0007744" key="14">
    <source>
    </source>
</evidence>
<evidence type="ECO:0007744" key="15">
    <source>
    </source>
</evidence>
<evidence type="ECO:0007744" key="16">
    <source>
    </source>
</evidence>
<evidence type="ECO:0007744" key="17">
    <source>
    </source>
</evidence>
<evidence type="ECO:0007744" key="18">
    <source>
    </source>
</evidence>
<evidence type="ECO:0007744" key="19">
    <source>
    </source>
</evidence>
<evidence type="ECO:0007744" key="20">
    <source>
    </source>
</evidence>
<evidence type="ECO:0007744" key="21">
    <source>
    </source>
</evidence>
<evidence type="ECO:0007744" key="22">
    <source>
    </source>
</evidence>
<evidence type="ECO:0007744" key="23">
    <source>
    </source>
</evidence>
<evidence type="ECO:0007744" key="24">
    <source>
    </source>
</evidence>
<reference key="1">
    <citation type="journal article" date="2003" name="Hum. Mol. Genet.">
        <title>82-FIP, a novel FMRP (fragile X mental retardation protein) interacting protein, shows a cell cycle-dependent intracellular localization.</title>
        <authorList>
            <person name="Bardoni B."/>
            <person name="Castets M."/>
            <person name="Huot M.-E."/>
            <person name="Schenck A."/>
            <person name="Adinolfi S."/>
            <person name="Corbin F."/>
            <person name="Pastore A."/>
            <person name="Khandjian E.W."/>
            <person name="Mandel J.-L."/>
        </authorList>
    </citation>
    <scope>NUCLEOTIDE SEQUENCE [MRNA] (ISOFORM 1)</scope>
    <scope>PROTEIN SEQUENCE OF 74-92 AND 593-609</scope>
    <scope>FUNCTION</scope>
    <scope>SUBUNIT</scope>
    <scope>SUBCELLULAR LOCATION</scope>
    <scope>INTERACTION WITH FMR1</scope>
</reference>
<reference key="2">
    <citation type="submission" date="2003-02" db="EMBL/GenBank/DDBJ databases">
        <authorList>
            <person name="Kim J.W."/>
        </authorList>
    </citation>
    <scope>NUCLEOTIDE SEQUENCE [LARGE SCALE MRNA] (ISOFORM 1)</scope>
</reference>
<reference key="3">
    <citation type="journal article" date="2000" name="DNA Res.">
        <title>Prediction of the coding sequences of unidentified human genes. XVI. The complete sequences of 150 new cDNA clones from brain which code for large proteins in vitro.</title>
        <authorList>
            <person name="Nagase T."/>
            <person name="Kikuno R."/>
            <person name="Ishikawa K."/>
            <person name="Hirosawa M."/>
            <person name="Ohara O."/>
        </authorList>
    </citation>
    <scope>NUCLEOTIDE SEQUENCE [LARGE SCALE MRNA] (ISOFORM 1)</scope>
    <source>
        <tissue>Brain</tissue>
    </source>
</reference>
<reference key="4">
    <citation type="journal article" date="2004" name="Nat. Genet.">
        <title>Complete sequencing and characterization of 21,243 full-length human cDNAs.</title>
        <authorList>
            <person name="Ota T."/>
            <person name="Suzuki Y."/>
            <person name="Nishikawa T."/>
            <person name="Otsuki T."/>
            <person name="Sugiyama T."/>
            <person name="Irie R."/>
            <person name="Wakamatsu A."/>
            <person name="Hayashi K."/>
            <person name="Sato H."/>
            <person name="Nagai K."/>
            <person name="Kimura K."/>
            <person name="Makita H."/>
            <person name="Sekine M."/>
            <person name="Obayashi M."/>
            <person name="Nishi T."/>
            <person name="Shibahara T."/>
            <person name="Tanaka T."/>
            <person name="Ishii S."/>
            <person name="Yamamoto J."/>
            <person name="Saito K."/>
            <person name="Kawai Y."/>
            <person name="Isono Y."/>
            <person name="Nakamura Y."/>
            <person name="Nagahari K."/>
            <person name="Murakami K."/>
            <person name="Yasuda T."/>
            <person name="Iwayanagi T."/>
            <person name="Wagatsuma M."/>
            <person name="Shiratori A."/>
            <person name="Sudo H."/>
            <person name="Hosoiri T."/>
            <person name="Kaku Y."/>
            <person name="Kodaira H."/>
            <person name="Kondo H."/>
            <person name="Sugawara M."/>
            <person name="Takahashi M."/>
            <person name="Kanda K."/>
            <person name="Yokoi T."/>
            <person name="Furuya T."/>
            <person name="Kikkawa E."/>
            <person name="Omura Y."/>
            <person name="Abe K."/>
            <person name="Kamihara K."/>
            <person name="Katsuta N."/>
            <person name="Sato K."/>
            <person name="Tanikawa M."/>
            <person name="Yamazaki M."/>
            <person name="Ninomiya K."/>
            <person name="Ishibashi T."/>
            <person name="Yamashita H."/>
            <person name="Murakawa K."/>
            <person name="Fujimori K."/>
            <person name="Tanai H."/>
            <person name="Kimata M."/>
            <person name="Watanabe M."/>
            <person name="Hiraoka S."/>
            <person name="Chiba Y."/>
            <person name="Ishida S."/>
            <person name="Ono Y."/>
            <person name="Takiguchi S."/>
            <person name="Watanabe S."/>
            <person name="Yosida M."/>
            <person name="Hotuta T."/>
            <person name="Kusano J."/>
            <person name="Kanehori K."/>
            <person name="Takahashi-Fujii A."/>
            <person name="Hara H."/>
            <person name="Tanase T.-O."/>
            <person name="Nomura Y."/>
            <person name="Togiya S."/>
            <person name="Komai F."/>
            <person name="Hara R."/>
            <person name="Takeuchi K."/>
            <person name="Arita M."/>
            <person name="Imose N."/>
            <person name="Musashino K."/>
            <person name="Yuuki H."/>
            <person name="Oshima A."/>
            <person name="Sasaki N."/>
            <person name="Aotsuka S."/>
            <person name="Yoshikawa Y."/>
            <person name="Matsunawa H."/>
            <person name="Ichihara T."/>
            <person name="Shiohata N."/>
            <person name="Sano S."/>
            <person name="Moriya S."/>
            <person name="Momiyama H."/>
            <person name="Satoh N."/>
            <person name="Takami S."/>
            <person name="Terashima Y."/>
            <person name="Suzuki O."/>
            <person name="Nakagawa S."/>
            <person name="Senoh A."/>
            <person name="Mizoguchi H."/>
            <person name="Goto Y."/>
            <person name="Shimizu F."/>
            <person name="Wakebe H."/>
            <person name="Hishigaki H."/>
            <person name="Watanabe T."/>
            <person name="Sugiyama A."/>
            <person name="Takemoto M."/>
            <person name="Kawakami B."/>
            <person name="Yamazaki M."/>
            <person name="Watanabe K."/>
            <person name="Kumagai A."/>
            <person name="Itakura S."/>
            <person name="Fukuzumi Y."/>
            <person name="Fujimori Y."/>
            <person name="Komiyama M."/>
            <person name="Tashiro H."/>
            <person name="Tanigami A."/>
            <person name="Fujiwara T."/>
            <person name="Ono T."/>
            <person name="Yamada K."/>
            <person name="Fujii Y."/>
            <person name="Ozaki K."/>
            <person name="Hirao M."/>
            <person name="Ohmori Y."/>
            <person name="Kawabata A."/>
            <person name="Hikiji T."/>
            <person name="Kobatake N."/>
            <person name="Inagaki H."/>
            <person name="Ikema Y."/>
            <person name="Okamoto S."/>
            <person name="Okitani R."/>
            <person name="Kawakami T."/>
            <person name="Noguchi S."/>
            <person name="Itoh T."/>
            <person name="Shigeta K."/>
            <person name="Senba T."/>
            <person name="Matsumura K."/>
            <person name="Nakajima Y."/>
            <person name="Mizuno T."/>
            <person name="Morinaga M."/>
            <person name="Sasaki M."/>
            <person name="Togashi T."/>
            <person name="Oyama M."/>
            <person name="Hata H."/>
            <person name="Watanabe M."/>
            <person name="Komatsu T."/>
            <person name="Mizushima-Sugano J."/>
            <person name="Satoh T."/>
            <person name="Shirai Y."/>
            <person name="Takahashi Y."/>
            <person name="Nakagawa K."/>
            <person name="Okumura K."/>
            <person name="Nagase T."/>
            <person name="Nomura N."/>
            <person name="Kikuchi H."/>
            <person name="Masuho Y."/>
            <person name="Yamashita R."/>
            <person name="Nakai K."/>
            <person name="Yada T."/>
            <person name="Nakamura Y."/>
            <person name="Ohara O."/>
            <person name="Isogai T."/>
            <person name="Sugano S."/>
        </authorList>
    </citation>
    <scope>NUCLEOTIDE SEQUENCE [LARGE SCALE MRNA] (ISOFORMS 1 AND 2)</scope>
</reference>
<reference key="5">
    <citation type="journal article" date="2006" name="Nature">
        <title>DNA sequence of human chromosome 17 and analysis of rearrangement in the human lineage.</title>
        <authorList>
            <person name="Zody M.C."/>
            <person name="Garber M."/>
            <person name="Adams D.J."/>
            <person name="Sharpe T."/>
            <person name="Harrow J."/>
            <person name="Lupski J.R."/>
            <person name="Nicholson C."/>
            <person name="Searle S.M."/>
            <person name="Wilming L."/>
            <person name="Young S.K."/>
            <person name="Abouelleil A."/>
            <person name="Allen N.R."/>
            <person name="Bi W."/>
            <person name="Bloom T."/>
            <person name="Borowsky M.L."/>
            <person name="Bugalter B.E."/>
            <person name="Butler J."/>
            <person name="Chang J.L."/>
            <person name="Chen C.-K."/>
            <person name="Cook A."/>
            <person name="Corum B."/>
            <person name="Cuomo C.A."/>
            <person name="de Jong P.J."/>
            <person name="DeCaprio D."/>
            <person name="Dewar K."/>
            <person name="FitzGerald M."/>
            <person name="Gilbert J."/>
            <person name="Gibson R."/>
            <person name="Gnerre S."/>
            <person name="Goldstein S."/>
            <person name="Grafham D.V."/>
            <person name="Grocock R."/>
            <person name="Hafez N."/>
            <person name="Hagopian D.S."/>
            <person name="Hart E."/>
            <person name="Norman C.H."/>
            <person name="Humphray S."/>
            <person name="Jaffe D.B."/>
            <person name="Jones M."/>
            <person name="Kamal M."/>
            <person name="Khodiyar V.K."/>
            <person name="LaButti K."/>
            <person name="Laird G."/>
            <person name="Lehoczky J."/>
            <person name="Liu X."/>
            <person name="Lokyitsang T."/>
            <person name="Loveland J."/>
            <person name="Lui A."/>
            <person name="Macdonald P."/>
            <person name="Major J.E."/>
            <person name="Matthews L."/>
            <person name="Mauceli E."/>
            <person name="McCarroll S.A."/>
            <person name="Mihalev A.H."/>
            <person name="Mudge J."/>
            <person name="Nguyen C."/>
            <person name="Nicol R."/>
            <person name="O'Leary S.B."/>
            <person name="Osoegawa K."/>
            <person name="Schwartz D.C."/>
            <person name="Shaw-Smith C."/>
            <person name="Stankiewicz P."/>
            <person name="Steward C."/>
            <person name="Swarbreck D."/>
            <person name="Venkataraman V."/>
            <person name="Whittaker C.A."/>
            <person name="Yang X."/>
            <person name="Zimmer A.R."/>
            <person name="Bradley A."/>
            <person name="Hubbard T."/>
            <person name="Birren B.W."/>
            <person name="Rogers J."/>
            <person name="Lander E.S."/>
            <person name="Nusbaum C."/>
        </authorList>
    </citation>
    <scope>NUCLEOTIDE SEQUENCE [LARGE SCALE GENOMIC DNA]</scope>
</reference>
<reference key="6">
    <citation type="submission" date="2005-07" db="EMBL/GenBank/DDBJ databases">
        <authorList>
            <person name="Mural R.J."/>
            <person name="Istrail S."/>
            <person name="Sutton G.G."/>
            <person name="Florea L."/>
            <person name="Halpern A.L."/>
            <person name="Mobarry C.M."/>
            <person name="Lippert R."/>
            <person name="Walenz B."/>
            <person name="Shatkay H."/>
            <person name="Dew I."/>
            <person name="Miller J.R."/>
            <person name="Flanigan M.J."/>
            <person name="Edwards N.J."/>
            <person name="Bolanos R."/>
            <person name="Fasulo D."/>
            <person name="Halldorsson B.V."/>
            <person name="Hannenhalli S."/>
            <person name="Turner R."/>
            <person name="Yooseph S."/>
            <person name="Lu F."/>
            <person name="Nusskern D.R."/>
            <person name="Shue B.C."/>
            <person name="Zheng X.H."/>
            <person name="Zhong F."/>
            <person name="Delcher A.L."/>
            <person name="Huson D.H."/>
            <person name="Kravitz S.A."/>
            <person name="Mouchard L."/>
            <person name="Reinert K."/>
            <person name="Remington K.A."/>
            <person name="Clark A.G."/>
            <person name="Waterman M.S."/>
            <person name="Eichler E.E."/>
            <person name="Adams M.D."/>
            <person name="Hunkapiller M.W."/>
            <person name="Myers E.W."/>
            <person name="Venter J.C."/>
        </authorList>
    </citation>
    <scope>NUCLEOTIDE SEQUENCE [LARGE SCALE GENOMIC DNA]</scope>
</reference>
<reference key="7">
    <citation type="journal article" date="2004" name="Genome Res.">
        <title>The status, quality, and expansion of the NIH full-length cDNA project: the Mammalian Gene Collection (MGC).</title>
        <authorList>
            <consortium name="The MGC Project Team"/>
        </authorList>
    </citation>
    <scope>NUCLEOTIDE SEQUENCE [LARGE SCALE MRNA] (ISOFORMS 1 AND 2)</scope>
    <source>
        <tissue>Uterus</tissue>
    </source>
</reference>
<reference key="8">
    <citation type="submission" date="2009-03" db="UniProtKB">
        <authorList>
            <person name="Bienvenut W.V."/>
            <person name="Waridel P."/>
            <person name="Quadroni M."/>
        </authorList>
    </citation>
    <scope>PROTEIN SEQUENCE OF 92-104; 110-136; 233-269; 331-351; 369-397; 531-563; 571-639; 650-659; 668-677 AND 683-695</scope>
    <scope>PHOSPHORYLATION AT SER-629</scope>
    <scope>IDENTIFICATION BY MASS SPECTROMETRY</scope>
    <source>
        <tissue>Cervix carcinoma</tissue>
    </source>
</reference>
<reference key="9">
    <citation type="journal article" date="2004" name="Anal. Chem.">
        <title>Robust phosphoproteomic profiling of tyrosine phosphorylation sites from human T cells using immobilized metal affinity chromatography and tandem mass spectrometry.</title>
        <authorList>
            <person name="Brill L.M."/>
            <person name="Salomon A.R."/>
            <person name="Ficarro S.B."/>
            <person name="Mukherji M."/>
            <person name="Stettler-Gill M."/>
            <person name="Peters E.C."/>
        </authorList>
    </citation>
    <scope>PHOSPHORYLATION [LARGE SCALE ANALYSIS] AT SER-652</scope>
    <scope>IDENTIFICATION BY MASS SPECTROMETRY [LARGE SCALE ANALYSIS]</scope>
    <source>
        <tissue>Leukemic T-cell</tissue>
    </source>
</reference>
<reference key="10">
    <citation type="journal article" date="2006" name="Cell">
        <title>Global, in vivo, and site-specific phosphorylation dynamics in signaling networks.</title>
        <authorList>
            <person name="Olsen J.V."/>
            <person name="Blagoev B."/>
            <person name="Gnad F."/>
            <person name="Macek B."/>
            <person name="Kumar C."/>
            <person name="Mortensen P."/>
            <person name="Mann M."/>
        </authorList>
    </citation>
    <scope>PHOSPHORYLATION [LARGE SCALE ANALYSIS] AT SER-652</scope>
    <scope>IDENTIFICATION BY MASS SPECTROMETRY [LARGE SCALE ANALYSIS]</scope>
    <source>
        <tissue>Cervix carcinoma</tissue>
    </source>
</reference>
<reference key="11">
    <citation type="journal article" date="2006" name="Nat. Biotechnol.">
        <title>A probability-based approach for high-throughput protein phosphorylation analysis and site localization.</title>
        <authorList>
            <person name="Beausoleil S.A."/>
            <person name="Villen J."/>
            <person name="Gerber S.A."/>
            <person name="Rush J."/>
            <person name="Gygi S.P."/>
        </authorList>
    </citation>
    <scope>PHOSPHORYLATION [LARGE SCALE ANALYSIS] AT SER-212 AND THR-220</scope>
    <scope>IDENTIFICATION BY MASS SPECTROMETRY [LARGE SCALE ANALYSIS]</scope>
    <source>
        <tissue>Cervix carcinoma</tissue>
    </source>
</reference>
<reference key="12">
    <citation type="journal article" date="2007" name="J. Proteome Res.">
        <title>Improved titanium dioxide enrichment of phosphopeptides from HeLa cells and high confident phosphopeptide identification by cross-validation of MS/MS and MS/MS/MS spectra.</title>
        <authorList>
            <person name="Yu L.R."/>
            <person name="Zhu Z."/>
            <person name="Chan K.C."/>
            <person name="Issaq H.J."/>
            <person name="Dimitrov D.S."/>
            <person name="Veenstra T.D."/>
        </authorList>
    </citation>
    <scope>PHOSPHORYLATION [LARGE SCALE ANALYSIS] AT THR-87</scope>
    <scope>IDENTIFICATION BY MASS SPECTROMETRY [LARGE SCALE ANALYSIS]</scope>
    <source>
        <tissue>Cervix carcinoma</tissue>
    </source>
</reference>
<reference key="13">
    <citation type="journal article" date="2007" name="Science">
        <title>ATM and ATR substrate analysis reveals extensive protein networks responsive to DNA damage.</title>
        <authorList>
            <person name="Matsuoka S."/>
            <person name="Ballif B.A."/>
            <person name="Smogorzewska A."/>
            <person name="McDonald E.R. III"/>
            <person name="Hurov K.E."/>
            <person name="Luo J."/>
            <person name="Bakalarski C.E."/>
            <person name="Zhao Z."/>
            <person name="Solimini N."/>
            <person name="Lerenthal Y."/>
            <person name="Shiloh Y."/>
            <person name="Gygi S.P."/>
            <person name="Elledge S.J."/>
        </authorList>
    </citation>
    <scope>IDENTIFICATION BY MASS SPECTROMETRY [LARGE SCALE ANALYSIS]</scope>
    <source>
        <tissue>Embryonic kidney</tissue>
    </source>
</reference>
<reference key="14">
    <citation type="journal article" date="2008" name="J. Proteome Res.">
        <title>Combining protein-based IMAC, peptide-based IMAC, and MudPIT for efficient phosphoproteomic analysis.</title>
        <authorList>
            <person name="Cantin G.T."/>
            <person name="Yi W."/>
            <person name="Lu B."/>
            <person name="Park S.K."/>
            <person name="Xu T."/>
            <person name="Lee J.-D."/>
            <person name="Yates J.R. III"/>
        </authorList>
    </citation>
    <scope>IDENTIFICATION BY MASS SPECTROMETRY [LARGE SCALE ANALYSIS]</scope>
    <source>
        <tissue>Cervix carcinoma</tissue>
    </source>
</reference>
<reference key="15">
    <citation type="journal article" date="2008" name="Mol. Cell">
        <title>Kinase-selective enrichment enables quantitative phosphoproteomics of the kinome across the cell cycle.</title>
        <authorList>
            <person name="Daub H."/>
            <person name="Olsen J.V."/>
            <person name="Bairlein M."/>
            <person name="Gnad F."/>
            <person name="Oppermann F.S."/>
            <person name="Korner R."/>
            <person name="Greff Z."/>
            <person name="Keri G."/>
            <person name="Stemmann O."/>
            <person name="Mann M."/>
        </authorList>
    </citation>
    <scope>PHOSPHORYLATION [LARGE SCALE ANALYSIS] AT SER-652</scope>
    <scope>IDENTIFICATION BY MASS SPECTROMETRY [LARGE SCALE ANALYSIS]</scope>
    <source>
        <tissue>Cervix carcinoma</tissue>
    </source>
</reference>
<reference key="16">
    <citation type="journal article" date="2008" name="Proc. Natl. Acad. Sci. U.S.A.">
        <title>A quantitative atlas of mitotic phosphorylation.</title>
        <authorList>
            <person name="Dephoure N."/>
            <person name="Zhou C."/>
            <person name="Villen J."/>
            <person name="Beausoleil S.A."/>
            <person name="Bakalarski C.E."/>
            <person name="Elledge S.J."/>
            <person name="Gygi S.P."/>
        </authorList>
    </citation>
    <scope>PHOSPHORYLATION [LARGE SCALE ANALYSIS] AT SER-112; SER-113; SER-212; SER-214; TYR-218; THR-219; THR-220; SER-572; SER-629; SER-637; SER-652 AND SER-692</scope>
    <scope>IDENTIFICATION BY MASS SPECTROMETRY [LARGE SCALE ANALYSIS]</scope>
    <source>
        <tissue>Cervix carcinoma</tissue>
    </source>
</reference>
<reference key="17">
    <citation type="journal article" date="2009" name="Anal. Chem.">
        <title>Lys-N and trypsin cover complementary parts of the phosphoproteome in a refined SCX-based approach.</title>
        <authorList>
            <person name="Gauci S."/>
            <person name="Helbig A.O."/>
            <person name="Slijper M."/>
            <person name="Krijgsveld J."/>
            <person name="Heck A.J."/>
            <person name="Mohammed S."/>
        </authorList>
    </citation>
    <scope>IDENTIFICATION BY MASS SPECTROMETRY [LARGE SCALE ANALYSIS]</scope>
</reference>
<reference key="18">
    <citation type="journal article" date="2009" name="Mol. Cell. Proteomics">
        <title>Large-scale proteomics analysis of the human kinome.</title>
        <authorList>
            <person name="Oppermann F.S."/>
            <person name="Gnad F."/>
            <person name="Olsen J.V."/>
            <person name="Hornberger R."/>
            <person name="Greff Z."/>
            <person name="Keri G."/>
            <person name="Mann M."/>
            <person name="Daub H."/>
        </authorList>
    </citation>
    <scope>PHOSPHORYLATION [LARGE SCALE ANALYSIS] AT SER-652</scope>
    <scope>IDENTIFICATION BY MASS SPECTROMETRY [LARGE SCALE ANALYSIS]</scope>
</reference>
<reference key="19">
    <citation type="journal article" date="2009" name="Sci. Signal.">
        <title>Quantitative phosphoproteomic analysis of T cell receptor signaling reveals system-wide modulation of protein-protein interactions.</title>
        <authorList>
            <person name="Mayya V."/>
            <person name="Lundgren D.H."/>
            <person name="Hwang S.-I."/>
            <person name="Rezaul K."/>
            <person name="Wu L."/>
            <person name="Eng J.K."/>
            <person name="Rodionov V."/>
            <person name="Han D.K."/>
        </authorList>
    </citation>
    <scope>PHOSPHORYLATION [LARGE SCALE ANALYSIS] AT SER-212; SER-376; SER-572; SER-629 AND SER-637</scope>
    <scope>IDENTIFICATION BY MASS SPECTROMETRY [LARGE SCALE ANALYSIS]</scope>
    <source>
        <tissue>Leukemic T-cell</tissue>
    </source>
</reference>
<reference key="20">
    <citation type="journal article" date="2010" name="Sci. Signal.">
        <title>Quantitative phosphoproteomics reveals widespread full phosphorylation site occupancy during mitosis.</title>
        <authorList>
            <person name="Olsen J.V."/>
            <person name="Vermeulen M."/>
            <person name="Santamaria A."/>
            <person name="Kumar C."/>
            <person name="Miller M.L."/>
            <person name="Jensen L.J."/>
            <person name="Gnad F."/>
            <person name="Cox J."/>
            <person name="Jensen T.S."/>
            <person name="Nigg E.A."/>
            <person name="Brunak S."/>
            <person name="Mann M."/>
        </authorList>
    </citation>
    <scope>PHOSPHORYLATION [LARGE SCALE ANALYSIS] AT THR-87; SER-112; SER-212; THR-571; SER-572; SER-629; THR-633; SER-652 AND SER-692</scope>
    <scope>IDENTIFICATION BY MASS SPECTROMETRY [LARGE SCALE ANALYSIS]</scope>
    <source>
        <tissue>Cervix carcinoma</tissue>
    </source>
</reference>
<reference key="21">
    <citation type="journal article" date="2011" name="BMC Syst. Biol.">
        <title>Initial characterization of the human central proteome.</title>
        <authorList>
            <person name="Burkard T.R."/>
            <person name="Planyavsky M."/>
            <person name="Kaupe I."/>
            <person name="Breitwieser F.P."/>
            <person name="Buerckstuemmer T."/>
            <person name="Bennett K.L."/>
            <person name="Superti-Furga G."/>
            <person name="Colinge J."/>
        </authorList>
    </citation>
    <scope>IDENTIFICATION BY MASS SPECTROMETRY [LARGE SCALE ANALYSIS]</scope>
</reference>
<reference key="22">
    <citation type="journal article" date="2011" name="Sci. Signal.">
        <title>System-wide temporal characterization of the proteome and phosphoproteome of human embryonic stem cell differentiation.</title>
        <authorList>
            <person name="Rigbolt K.T."/>
            <person name="Prokhorova T.A."/>
            <person name="Akimov V."/>
            <person name="Henningsen J."/>
            <person name="Johansen P.T."/>
            <person name="Kratchmarova I."/>
            <person name="Kassem M."/>
            <person name="Mann M."/>
            <person name="Olsen J.V."/>
            <person name="Blagoev B."/>
        </authorList>
    </citation>
    <scope>PHOSPHORYLATION [LARGE SCALE ANALYSIS] AT SER-112; SER-212; SER-572; SER-629; SER-652; SER-655 AND SER-692</scope>
    <scope>IDENTIFICATION BY MASS SPECTROMETRY [LARGE SCALE ANALYSIS]</scope>
</reference>
<reference key="23">
    <citation type="journal article" date="2013" name="J. Proteome Res.">
        <title>Toward a comprehensive characterization of a human cancer cell phosphoproteome.</title>
        <authorList>
            <person name="Zhou H."/>
            <person name="Di Palma S."/>
            <person name="Preisinger C."/>
            <person name="Peng M."/>
            <person name="Polat A.N."/>
            <person name="Heck A.J."/>
            <person name="Mohammed S."/>
        </authorList>
    </citation>
    <scope>PHOSPHORYLATION [LARGE SCALE ANALYSIS] AT SER-112; SER-212; SER-214; SER-572; SER-592; SER-608; SER-629; SER-652 AND SER-692</scope>
    <scope>IDENTIFICATION BY MASS SPECTROMETRY [LARGE SCALE ANALYSIS]</scope>
    <source>
        <tissue>Cervix carcinoma</tissue>
        <tissue>Erythroleukemia</tissue>
    </source>
</reference>
<reference key="24">
    <citation type="journal article" date="2014" name="J. Proteomics">
        <title>An enzyme assisted RP-RPLC approach for in-depth analysis of human liver phosphoproteome.</title>
        <authorList>
            <person name="Bian Y."/>
            <person name="Song C."/>
            <person name="Cheng K."/>
            <person name="Dong M."/>
            <person name="Wang F."/>
            <person name="Huang J."/>
            <person name="Sun D."/>
            <person name="Wang L."/>
            <person name="Ye M."/>
            <person name="Zou H."/>
        </authorList>
    </citation>
    <scope>PHOSPHORYLATION [LARGE SCALE ANALYSIS] AT SER-304 AND SER-629</scope>
    <scope>IDENTIFICATION BY MASS SPECTROMETRY [LARGE SCALE ANALYSIS]</scope>
    <source>
        <tissue>Liver</tissue>
    </source>
</reference>
<reference key="25">
    <citation type="journal article" date="2014" name="Mol. Cell. Proteomics">
        <title>Immunoaffinity enrichment and mass spectrometry analysis of protein methylation.</title>
        <authorList>
            <person name="Guo A."/>
            <person name="Gu H."/>
            <person name="Zhou J."/>
            <person name="Mulhern D."/>
            <person name="Wang Y."/>
            <person name="Lee K.A."/>
            <person name="Yang V."/>
            <person name="Aguiar M."/>
            <person name="Kornhauser J."/>
            <person name="Jia X."/>
            <person name="Ren J."/>
            <person name="Beausoleil S.A."/>
            <person name="Silva J.C."/>
            <person name="Vemulapalli V."/>
            <person name="Bedford M.T."/>
            <person name="Comb M.J."/>
        </authorList>
    </citation>
    <scope>METHYLATION [LARGE SCALE ANALYSIS] AT ARG-291</scope>
    <scope>IDENTIFICATION BY MASS SPECTROMETRY [LARGE SCALE ANALYSIS]</scope>
    <source>
        <tissue>Colon carcinoma</tissue>
    </source>
</reference>
<reference key="26">
    <citation type="journal article" date="2015" name="Biomolecules">
        <title>Comprehensive protein interactome analysis of a key RNA helicase: detection of novel stress granule proteins.</title>
        <authorList>
            <person name="Bish R."/>
            <person name="Cuevas-Polo N."/>
            <person name="Cheng Z."/>
            <person name="Hambardzumyan D."/>
            <person name="Munschauer M."/>
            <person name="Landthaler M."/>
            <person name="Vogel C."/>
        </authorList>
    </citation>
    <scope>INTERACTION WITH DDX6</scope>
    <scope>SUBCELLULAR LOCATION</scope>
</reference>
<reference key="27">
    <citation type="journal article" date="2015" name="Mol. Cell. Proteomics">
        <title>System-wide analysis of SUMOylation dynamics in response to replication stress reveals novel small ubiquitin-like modified target proteins and acceptor lysines relevant for genome stability.</title>
        <authorList>
            <person name="Xiao Z."/>
            <person name="Chang J.G."/>
            <person name="Hendriks I.A."/>
            <person name="Sigurdsson J.O."/>
            <person name="Olsen J.V."/>
            <person name="Vertegaal A.C."/>
        </authorList>
    </citation>
    <scope>SUMOYLATION [LARGE SCALE ANALYSIS] AT LYS-146 AND LYS-307</scope>
    <scope>IDENTIFICATION BY MASS SPECTROMETRY [LARGE SCALE ANALYSIS]</scope>
</reference>
<reference key="28">
    <citation type="journal article" date="2017" name="Nat. Struct. Mol. Biol.">
        <title>Site-specific mapping of the human SUMO proteome reveals co-modification with phosphorylation.</title>
        <authorList>
            <person name="Hendriks I.A."/>
            <person name="Lyon D."/>
            <person name="Young C."/>
            <person name="Jensen L.J."/>
            <person name="Vertegaal A.C."/>
            <person name="Nielsen M.L."/>
        </authorList>
    </citation>
    <scope>SUMOYLATION [LARGE SCALE ANALYSIS] AT LYS-78; LYS-109; LYS-136; LYS-146; LYS-157; LYS-171; LYS-262; LYS-281; LYS-293 AND LYS-307</scope>
    <scope>IDENTIFICATION BY MASS SPECTROMETRY [LARGE SCALE ANALYSIS]</scope>
</reference>
<feature type="chain" id="PRO_0000245521" description="FMR1-interacting protein NUFIP2">
    <location>
        <begin position="1"/>
        <end position="695"/>
    </location>
</feature>
<feature type="region of interest" description="Disordered" evidence="1">
    <location>
        <begin position="1"/>
        <end position="100"/>
    </location>
</feature>
<feature type="region of interest" description="Disordered" evidence="1">
    <location>
        <begin position="155"/>
        <end position="189"/>
    </location>
</feature>
<feature type="region of interest" description="Disordered" evidence="1">
    <location>
        <begin position="204"/>
        <end position="234"/>
    </location>
</feature>
<feature type="region of interest" description="Disordered" evidence="1">
    <location>
        <begin position="261"/>
        <end position="341"/>
    </location>
</feature>
<feature type="region of interest" description="Disordered" evidence="1">
    <location>
        <begin position="369"/>
        <end position="402"/>
    </location>
</feature>
<feature type="compositionally biased region" description="Basic residues" evidence="1">
    <location>
        <begin position="11"/>
        <end position="23"/>
    </location>
</feature>
<feature type="compositionally biased region" description="Basic residues" evidence="1">
    <location>
        <begin position="30"/>
        <end position="53"/>
    </location>
</feature>
<feature type="compositionally biased region" description="Basic and acidic residues" evidence="1">
    <location>
        <begin position="159"/>
        <end position="182"/>
    </location>
</feature>
<feature type="compositionally biased region" description="Basic residues" evidence="1">
    <location>
        <begin position="221"/>
        <end position="230"/>
    </location>
</feature>
<feature type="compositionally biased region" description="Basic and acidic residues" evidence="1">
    <location>
        <begin position="261"/>
        <end position="275"/>
    </location>
</feature>
<feature type="compositionally biased region" description="Low complexity" evidence="1">
    <location>
        <begin position="373"/>
        <end position="396"/>
    </location>
</feature>
<feature type="modified residue" description="Phosphothreonine" evidence="13 18">
    <location>
        <position position="87"/>
    </location>
</feature>
<feature type="modified residue" description="Phosphoserine" evidence="14 18 19 20">
    <location>
        <position position="112"/>
    </location>
</feature>
<feature type="modified residue" description="Phosphoserine" evidence="14">
    <location>
        <position position="113"/>
    </location>
</feature>
<feature type="modified residue" description="Phosphoserine" evidence="11 14 17 18 19 20">
    <location>
        <position position="212"/>
    </location>
</feature>
<feature type="modified residue" description="Phosphoserine" evidence="14 20">
    <location>
        <position position="214"/>
    </location>
</feature>
<feature type="modified residue" description="Phosphotyrosine" evidence="14">
    <location>
        <position position="218"/>
    </location>
</feature>
<feature type="modified residue" description="Phosphothreonine" evidence="14">
    <location>
        <position position="219"/>
    </location>
</feature>
<feature type="modified residue" description="Phosphothreonine" evidence="11 14">
    <location>
        <position position="220"/>
    </location>
</feature>
<feature type="modified residue" description="Omega-N-methylarginine" evidence="21">
    <location>
        <position position="291"/>
    </location>
</feature>
<feature type="modified residue" description="Phosphoserine" evidence="22">
    <location>
        <position position="304"/>
    </location>
</feature>
<feature type="modified residue" description="Phosphoserine" evidence="17">
    <location>
        <position position="376"/>
    </location>
</feature>
<feature type="modified residue" description="Phosphothreonine" evidence="18">
    <location>
        <position position="571"/>
    </location>
</feature>
<feature type="modified residue" description="Phosphoserine" evidence="14 17 18 19 20">
    <location>
        <position position="572"/>
    </location>
</feature>
<feature type="modified residue" description="Phosphoserine" evidence="20">
    <location>
        <position position="592"/>
    </location>
</feature>
<feature type="modified residue" description="Phosphoserine" evidence="20">
    <location>
        <position position="608"/>
    </location>
</feature>
<feature type="modified residue" description="Phosphoserine" evidence="4 14 17 18 19 20 22">
    <location>
        <position position="629"/>
    </location>
</feature>
<feature type="modified residue" description="Phosphothreonine" evidence="18">
    <location>
        <position position="633"/>
    </location>
</feature>
<feature type="modified residue" description="Phosphoserine" evidence="14 17">
    <location>
        <position position="637"/>
    </location>
</feature>
<feature type="modified residue" description="Phosphoserine" evidence="10 12 14 15 16 18 19 20">
    <location>
        <position position="652"/>
    </location>
</feature>
<feature type="modified residue" description="Phosphoserine" evidence="19">
    <location>
        <position position="655"/>
    </location>
</feature>
<feature type="modified residue" description="Phosphoserine" evidence="14 18 19 20">
    <location>
        <position position="692"/>
    </location>
</feature>
<feature type="cross-link" description="Glycyl lysine isopeptide (Lys-Gly) (interchain with G-Cter in SUMO2)" evidence="24">
    <location>
        <position position="78"/>
    </location>
</feature>
<feature type="cross-link" description="Glycyl lysine isopeptide (Lys-Gly) (interchain with G-Cter in SUMO2)" evidence="24">
    <location>
        <position position="109"/>
    </location>
</feature>
<feature type="cross-link" description="Glycyl lysine isopeptide (Lys-Gly) (interchain with G-Cter in SUMO2)" evidence="24">
    <location>
        <position position="136"/>
    </location>
</feature>
<feature type="cross-link" description="Glycyl lysine isopeptide (Lys-Gly) (interchain with G-Cter in SUMO2)" evidence="23 24">
    <location>
        <position position="146"/>
    </location>
</feature>
<feature type="cross-link" description="Glycyl lysine isopeptide (Lys-Gly) (interchain with G-Cter in SUMO2)" evidence="24">
    <location>
        <position position="157"/>
    </location>
</feature>
<feature type="cross-link" description="Glycyl lysine isopeptide (Lys-Gly) (interchain with G-Cter in SUMO2)" evidence="24">
    <location>
        <position position="171"/>
    </location>
</feature>
<feature type="cross-link" description="Glycyl lysine isopeptide (Lys-Gly) (interchain with G-Cter in SUMO2)" evidence="24">
    <location>
        <position position="262"/>
    </location>
</feature>
<feature type="cross-link" description="Glycyl lysine isopeptide (Lys-Gly) (interchain with G-Cter in SUMO2)" evidence="24">
    <location>
        <position position="281"/>
    </location>
</feature>
<feature type="cross-link" description="Glycyl lysine isopeptide (Lys-Gly) (interchain with G-Cter in SUMO2)" evidence="24">
    <location>
        <position position="293"/>
    </location>
</feature>
<feature type="cross-link" description="Glycyl lysine isopeptide (Lys-Gly) (interchain with G-Cter in SUMO2)" evidence="23 24">
    <location>
        <position position="307"/>
    </location>
</feature>
<feature type="splice variant" id="VSP_056177" description="In isoform 2." evidence="5 6">
    <location>
        <begin position="93"/>
        <end position="667"/>
    </location>
</feature>
<organism>
    <name type="scientific">Homo sapiens</name>
    <name type="common">Human</name>
    <dbReference type="NCBI Taxonomy" id="9606"/>
    <lineage>
        <taxon>Eukaryota</taxon>
        <taxon>Metazoa</taxon>
        <taxon>Chordata</taxon>
        <taxon>Craniata</taxon>
        <taxon>Vertebrata</taxon>
        <taxon>Euteleostomi</taxon>
        <taxon>Mammalia</taxon>
        <taxon>Eutheria</taxon>
        <taxon>Euarchontoglires</taxon>
        <taxon>Primates</taxon>
        <taxon>Haplorrhini</taxon>
        <taxon>Catarrhini</taxon>
        <taxon>Hominidae</taxon>
        <taxon>Homo</taxon>
    </lineage>
</organism>
<name>NUFP2_HUMAN</name>